<dbReference type="EMBL" id="AF439397">
    <property type="protein sequence ID" value="AAL35221.1"/>
    <property type="molecule type" value="mRNA"/>
</dbReference>
<dbReference type="EMBL" id="AF532776">
    <property type="protein sequence ID" value="AAM95974.1"/>
    <property type="molecule type" value="mRNA"/>
</dbReference>
<dbReference type="EMBL" id="BC063144">
    <property type="protein sequence ID" value="AAH63144.1"/>
    <property type="molecule type" value="mRNA"/>
</dbReference>
<dbReference type="RefSeq" id="NP_671479.1">
    <property type="nucleotide sequence ID" value="NM_147138.3"/>
</dbReference>
<dbReference type="RefSeq" id="XP_038954393.1">
    <property type="nucleotide sequence ID" value="XM_039098465.2"/>
</dbReference>
<dbReference type="RefSeq" id="XP_063135057.1">
    <property type="nucleotide sequence ID" value="XM_063278987.1"/>
</dbReference>
<dbReference type="SMR" id="Q8VIL3"/>
<dbReference type="BioGRID" id="251696">
    <property type="interactions" value="4"/>
</dbReference>
<dbReference type="FunCoup" id="Q8VIL3">
    <property type="interactions" value="682"/>
</dbReference>
<dbReference type="STRING" id="10116.ENSRNOP00000067414"/>
<dbReference type="iPTMnet" id="Q8VIL3"/>
<dbReference type="PhosphoSitePlus" id="Q8VIL3"/>
<dbReference type="jPOST" id="Q8VIL3"/>
<dbReference type="PaxDb" id="10116-ENSRNOP00000067414"/>
<dbReference type="Ensembl" id="ENSRNOT00000074404.3">
    <property type="protein sequence ID" value="ENSRNOP00000067414.1"/>
    <property type="gene ID" value="ENSRNOG00000048682.3"/>
</dbReference>
<dbReference type="GeneID" id="257644"/>
<dbReference type="KEGG" id="rno:257644"/>
<dbReference type="AGR" id="RGD:628671"/>
<dbReference type="CTD" id="11130"/>
<dbReference type="RGD" id="628671">
    <property type="gene designation" value="Zwint"/>
</dbReference>
<dbReference type="eggNOG" id="ENOG502S6PG">
    <property type="taxonomic scope" value="Eukaryota"/>
</dbReference>
<dbReference type="GeneTree" id="ENSGT00390000017639"/>
<dbReference type="HOGENOM" id="CLU_089675_0_0_1"/>
<dbReference type="InParanoid" id="Q8VIL3"/>
<dbReference type="OMA" id="TEAKEQW"/>
<dbReference type="OrthoDB" id="9893446at2759"/>
<dbReference type="PhylomeDB" id="Q8VIL3"/>
<dbReference type="Reactome" id="R-RNO-141444">
    <property type="pathway name" value="Amplification of signal from unattached kinetochores via a MAD2 inhibitory signal"/>
</dbReference>
<dbReference type="Reactome" id="R-RNO-2467813">
    <property type="pathway name" value="Separation of Sister Chromatids"/>
</dbReference>
<dbReference type="Reactome" id="R-RNO-2500257">
    <property type="pathway name" value="Resolution of Sister Chromatid Cohesion"/>
</dbReference>
<dbReference type="Reactome" id="R-RNO-5663220">
    <property type="pathway name" value="RHO GTPases Activate Formins"/>
</dbReference>
<dbReference type="Reactome" id="R-RNO-68877">
    <property type="pathway name" value="Mitotic Prometaphase"/>
</dbReference>
<dbReference type="Reactome" id="R-RNO-9648025">
    <property type="pathway name" value="EML4 and NUDC in mitotic spindle formation"/>
</dbReference>
<dbReference type="PRO" id="PR:Q8VIL3"/>
<dbReference type="Proteomes" id="UP000002494">
    <property type="component" value="Chromosome 20"/>
</dbReference>
<dbReference type="Bgee" id="ENSRNOG00000048682">
    <property type="expression patterns" value="Expressed in Ammon's horn and 20 other cell types or tissues"/>
</dbReference>
<dbReference type="GO" id="GO:0005737">
    <property type="term" value="C:cytoplasm"/>
    <property type="evidence" value="ECO:0000266"/>
    <property type="project" value="RGD"/>
</dbReference>
<dbReference type="GO" id="GO:0005829">
    <property type="term" value="C:cytosol"/>
    <property type="evidence" value="ECO:0000318"/>
    <property type="project" value="GO_Central"/>
</dbReference>
<dbReference type="GO" id="GO:0030425">
    <property type="term" value="C:dendrite"/>
    <property type="evidence" value="ECO:0000314"/>
    <property type="project" value="RGD"/>
</dbReference>
<dbReference type="GO" id="GO:0000776">
    <property type="term" value="C:kinetochore"/>
    <property type="evidence" value="ECO:0000250"/>
    <property type="project" value="UniProtKB"/>
</dbReference>
<dbReference type="GO" id="GO:0180019">
    <property type="term" value="C:Knl1/Spc105 complex"/>
    <property type="evidence" value="ECO:0000250"/>
    <property type="project" value="UniProtKB"/>
</dbReference>
<dbReference type="GO" id="GO:0016604">
    <property type="term" value="C:nuclear body"/>
    <property type="evidence" value="ECO:0000318"/>
    <property type="project" value="GO_Central"/>
</dbReference>
<dbReference type="GO" id="GO:0000940">
    <property type="term" value="C:outer kinetochore"/>
    <property type="evidence" value="ECO:0000266"/>
    <property type="project" value="RGD"/>
</dbReference>
<dbReference type="GO" id="GO:0051301">
    <property type="term" value="P:cell division"/>
    <property type="evidence" value="ECO:0007669"/>
    <property type="project" value="UniProtKB-KW"/>
</dbReference>
<dbReference type="GO" id="GO:0051649">
    <property type="term" value="P:establishment of localization in cell"/>
    <property type="evidence" value="ECO:0000266"/>
    <property type="project" value="RGD"/>
</dbReference>
<dbReference type="GO" id="GO:0031619">
    <property type="term" value="P:homologous chromosome orientation in meiotic metaphase I"/>
    <property type="evidence" value="ECO:0000250"/>
    <property type="project" value="UniProtKB"/>
</dbReference>
<dbReference type="GO" id="GO:0000070">
    <property type="term" value="P:mitotic sister chromatid segregation"/>
    <property type="evidence" value="ECO:0000266"/>
    <property type="project" value="RGD"/>
</dbReference>
<dbReference type="GO" id="GO:0007094">
    <property type="term" value="P:mitotic spindle assembly checkpoint signaling"/>
    <property type="evidence" value="ECO:0000266"/>
    <property type="project" value="RGD"/>
</dbReference>
<dbReference type="GO" id="GO:1905325">
    <property type="term" value="P:regulation of meiosis I spindle assembly checkpoint"/>
    <property type="evidence" value="ECO:0000250"/>
    <property type="project" value="UniProtKB"/>
</dbReference>
<dbReference type="Gene3D" id="1.20.5.4090">
    <property type="match status" value="1"/>
</dbReference>
<dbReference type="InterPro" id="IPR029092">
    <property type="entry name" value="Zwint-1"/>
</dbReference>
<dbReference type="PANTHER" id="PTHR31504:SF1">
    <property type="entry name" value="ZW10 INTERACTOR"/>
    <property type="match status" value="1"/>
</dbReference>
<dbReference type="PANTHER" id="PTHR31504">
    <property type="entry name" value="ZW10 INTERACTOR ZWINT"/>
    <property type="match status" value="1"/>
</dbReference>
<dbReference type="Pfam" id="PF15556">
    <property type="entry name" value="Zwint"/>
    <property type="match status" value="1"/>
</dbReference>
<reference key="1">
    <citation type="journal article" date="2002" name="J. Neurochem.">
        <title>Identification of a novel SNAP25 interacting protein (SIP30).</title>
        <authorList>
            <person name="Lee H.-K."/>
            <person name="Safieddine S."/>
            <person name="Petralia R.S."/>
            <person name="Wenthold R.J."/>
        </authorList>
    </citation>
    <scope>NUCLEOTIDE SEQUENCE [MRNA]</scope>
    <scope>INTERACTION WITH SNAP25</scope>
    <source>
        <strain>Sprague-Dawley</strain>
    </source>
</reference>
<reference key="2">
    <citation type="submission" date="2002-07" db="EMBL/GenBank/DDBJ databases">
        <authorList>
            <person name="Okamoto M."/>
            <person name="Suedhof T.C."/>
        </authorList>
    </citation>
    <scope>NUCLEOTIDE SEQUENCE [MRNA]</scope>
    <source>
        <tissue>Brain</tissue>
    </source>
</reference>
<reference key="3">
    <citation type="journal article" date="2004" name="Genome Res.">
        <title>The status, quality, and expansion of the NIH full-length cDNA project: the Mammalian Gene Collection (MGC).</title>
        <authorList>
            <consortium name="The MGC Project Team"/>
        </authorList>
    </citation>
    <scope>NUCLEOTIDE SEQUENCE [LARGE SCALE MRNA]</scope>
    <source>
        <tissue>Pituitary</tissue>
    </source>
</reference>
<reference key="4">
    <citation type="submission" date="2007-04" db="UniProtKB">
        <authorList>
            <person name="Lubec G."/>
            <person name="Chen W.-Q."/>
        </authorList>
    </citation>
    <scope>PROTEIN SEQUENCE OF 13-30; 123-133 AND 156-163</scope>
    <scope>IDENTIFICATION BY MASS SPECTROMETRY</scope>
    <source>
        <strain>Sprague-Dawley</strain>
        <tissue>Hippocampus</tissue>
    </source>
</reference>
<reference key="5">
    <citation type="journal article" date="2012" name="Nat. Commun.">
        <title>Quantitative maps of protein phosphorylation sites across 14 different rat organs and tissues.</title>
        <authorList>
            <person name="Lundby A."/>
            <person name="Secher A."/>
            <person name="Lage K."/>
            <person name="Nordsborg N.B."/>
            <person name="Dmytriyev A."/>
            <person name="Lundby C."/>
            <person name="Olsen J.V."/>
        </authorList>
    </citation>
    <scope>PHOSPHORYLATION [LARGE SCALE ANALYSIS] AT SER-232 AND SER-265</scope>
    <scope>IDENTIFICATION BY MASS SPECTROMETRY [LARGE SCALE ANALYSIS]</scope>
</reference>
<name>ZWINT_RAT</name>
<accession>Q8VIL3</accession>
<accession>Q546Y5</accession>
<evidence type="ECO:0000250" key="1">
    <source>
        <dbReference type="UniProtKB" id="O95229"/>
    </source>
</evidence>
<evidence type="ECO:0000250" key="2">
    <source>
        <dbReference type="UniProtKB" id="Q9CQU5"/>
    </source>
</evidence>
<evidence type="ECO:0000255" key="3"/>
<evidence type="ECO:0000256" key="4">
    <source>
        <dbReference type="SAM" id="MobiDB-lite"/>
    </source>
</evidence>
<evidence type="ECO:0000305" key="5"/>
<evidence type="ECO:0007744" key="6">
    <source>
    </source>
</evidence>
<gene>
    <name type="primary">Zwint</name>
    <name type="synonym">Sip30</name>
</gene>
<proteinExistence type="evidence at protein level"/>
<sequence>MADAEKNAVAEKNAVAEENAVAEENAVADKNATKEVLAEAASVLEPVGLPEEAELPAKIMEEFMRNSRKKDKLLCSQLQVVNFLQTFLAQEDNTDQNPDALASEDTSRQKATETKEQWKELKATYMDHVDVIKCALSEALPQVKEAHRKYTELQKAFEQLEAKKRVLEEKLQLAQKQWVLQQKRLQNLTKISAEVKRRRKRALEKLDGSHQELETLKQQAGQEQEKLQRNQSYLQLLCSLQNKLVISESKADDKDVKGPALPPKSP</sequence>
<keyword id="KW-0131">Cell cycle</keyword>
<keyword id="KW-0132">Cell division</keyword>
<keyword id="KW-0137">Centromere</keyword>
<keyword id="KW-0158">Chromosome</keyword>
<keyword id="KW-0175">Coiled coil</keyword>
<keyword id="KW-0903">Direct protein sequencing</keyword>
<keyword id="KW-0995">Kinetochore</keyword>
<keyword id="KW-0498">Mitosis</keyword>
<keyword id="KW-0539">Nucleus</keyword>
<keyword id="KW-0597">Phosphoprotein</keyword>
<keyword id="KW-1185">Reference proteome</keyword>
<feature type="chain" id="PRO_0000066596" description="Outer kinetochore KNL1 complex subunit ZWINT">
    <location>
        <begin position="1"/>
        <end position="266"/>
    </location>
</feature>
<feature type="region of interest" description="Disordered" evidence="4">
    <location>
        <begin position="95"/>
        <end position="115"/>
    </location>
</feature>
<feature type="coiled-coil region" evidence="3">
    <location>
        <begin position="136"/>
        <end position="237"/>
    </location>
</feature>
<feature type="compositionally biased region" description="Basic and acidic residues" evidence="4">
    <location>
        <begin position="105"/>
        <end position="115"/>
    </location>
</feature>
<feature type="modified residue" description="Phosphoserine" evidence="6">
    <location>
        <position position="232"/>
    </location>
</feature>
<feature type="modified residue" description="Phosphoserine" evidence="6">
    <location>
        <position position="265"/>
    </location>
</feature>
<protein>
    <recommendedName>
        <fullName evidence="5">Outer kinetochore KNL1 complex subunit ZWINT</fullName>
    </recommendedName>
    <alternativeName>
        <fullName>SNAP25-interacting protein 30</fullName>
    </alternativeName>
    <alternativeName>
        <fullName>Scoilin</fullName>
    </alternativeName>
    <alternativeName>
        <fullName>ZW10 interactor</fullName>
    </alternativeName>
    <alternativeName>
        <fullName>ZW10-interacting protein 1</fullName>
        <shortName>Zwint-1</shortName>
    </alternativeName>
</protein>
<comment type="function">
    <text evidence="1 2">Acts as a component of the outer kinetochore KNL1 complex that serves as a docking point for spindle assembly checkpoint components and mediates microtubule-kinetochore interactions. Kinetochores, consisting of a centromere-associated inner segment and a microtubule-contacting outer segment, play a crucial role in chromosome segregation by mediating the physical connection between centromeric DNA and spindle microtubules. The outer kinetochore is made up of the ten-subunit KMN network, comprising the MIS12, NDC80 and KNL1 complexes, and auxiliary microtubule-associated components; together they connect the outer kinetochore with the inner kinetochore, bind microtubules, and mediate interactions with mitotic checkpoint proteins that delay anaphase until chromosomes are bioriented on the spindle. Targets the RZZ complex to the kinetochore at prometaphase (By similarity). Recruits MAD2L1 to the kinetochore, but is not required for BUB1B localization. In addition to orienting mitotic chromosomes, it is also essential for alignment of homologous chromosomes during meiotic metaphase I. In meiosis I, required to activate the spindle assembly checkpoint at unattached kinetochores to correct erroneous kinetochore-microtubule attachments (By similarity).</text>
</comment>
<comment type="subunit">
    <text evidence="1">Component of the KNL1 complex composed of KNL1 and ZWINT. Part of the ten-subunit outer kinetochore KMN network that includes the KNL1, MIS12 and NDC80 complexes; a bioriented kinetochore contains approximately 150 copies of the network. Interacts with the MIS12 complex subunits MIS12 DSN1, and PMF1. Interacts with the NDC80 complex subunit NDC80 during mitosis. Interacts with ZW10. Interacts with CETN3.</text>
</comment>
<comment type="subcellular location">
    <subcellularLocation>
        <location evidence="1">Nucleus</location>
    </subcellularLocation>
    <subcellularLocation>
        <location evidence="1">Chromosome</location>
        <location evidence="1">Centromere</location>
        <location evidence="1">Kinetochore</location>
    </subcellularLocation>
    <text evidence="1 2">Localizes to kinetochores from late prophase to anaphase (By similarity). Localizes to kinetochores both during mitosis and meiosis (By similarity).</text>
</comment>
<comment type="tissue specificity">
    <text>Expressed abundantly in brain and at lower levels in testis and kidney.</text>
</comment>
<organism>
    <name type="scientific">Rattus norvegicus</name>
    <name type="common">Rat</name>
    <dbReference type="NCBI Taxonomy" id="10116"/>
    <lineage>
        <taxon>Eukaryota</taxon>
        <taxon>Metazoa</taxon>
        <taxon>Chordata</taxon>
        <taxon>Craniata</taxon>
        <taxon>Vertebrata</taxon>
        <taxon>Euteleostomi</taxon>
        <taxon>Mammalia</taxon>
        <taxon>Eutheria</taxon>
        <taxon>Euarchontoglires</taxon>
        <taxon>Glires</taxon>
        <taxon>Rodentia</taxon>
        <taxon>Myomorpha</taxon>
        <taxon>Muroidea</taxon>
        <taxon>Muridae</taxon>
        <taxon>Murinae</taxon>
        <taxon>Rattus</taxon>
    </lineage>
</organism>